<proteinExistence type="inferred from homology"/>
<evidence type="ECO:0000255" key="1">
    <source>
        <dbReference type="HAMAP-Rule" id="MF_01444"/>
    </source>
</evidence>
<protein>
    <recommendedName>
        <fullName evidence="1">Putative phosphoesterase USA300HOU_0973</fullName>
        <ecNumber evidence="1">3.1.-.-</ecNumber>
    </recommendedName>
</protein>
<reference key="1">
    <citation type="journal article" date="2007" name="BMC Microbiol.">
        <title>Subtle genetic changes enhance virulence of methicillin resistant and sensitive Staphylococcus aureus.</title>
        <authorList>
            <person name="Highlander S.K."/>
            <person name="Hulten K.G."/>
            <person name="Qin X."/>
            <person name="Jiang H."/>
            <person name="Yerrapragada S."/>
            <person name="Mason E.O. Jr."/>
            <person name="Shang Y."/>
            <person name="Williams T.M."/>
            <person name="Fortunov R.M."/>
            <person name="Liu Y."/>
            <person name="Igboeli O."/>
            <person name="Petrosino J."/>
            <person name="Tirumalai M."/>
            <person name="Uzman A."/>
            <person name="Fox G.E."/>
            <person name="Cardenas A.M."/>
            <person name="Muzny D.M."/>
            <person name="Hemphill L."/>
            <person name="Ding Y."/>
            <person name="Dugan S."/>
            <person name="Blyth P.R."/>
            <person name="Buhay C.J."/>
            <person name="Dinh H.H."/>
            <person name="Hawes A.C."/>
            <person name="Holder M."/>
            <person name="Kovar C.L."/>
            <person name="Lee S.L."/>
            <person name="Liu W."/>
            <person name="Nazareth L.V."/>
            <person name="Wang Q."/>
            <person name="Zhou J."/>
            <person name="Kaplan S.L."/>
            <person name="Weinstock G.M."/>
        </authorList>
    </citation>
    <scope>NUCLEOTIDE SEQUENCE [LARGE SCALE GENOMIC DNA]</scope>
    <source>
        <strain>USA300 / TCH1516</strain>
    </source>
</reference>
<gene>
    <name type="ordered locus">USA300HOU_0973</name>
</gene>
<keyword id="KW-0378">Hydrolase</keyword>
<organism>
    <name type="scientific">Staphylococcus aureus (strain USA300 / TCH1516)</name>
    <dbReference type="NCBI Taxonomy" id="451516"/>
    <lineage>
        <taxon>Bacteria</taxon>
        <taxon>Bacillati</taxon>
        <taxon>Bacillota</taxon>
        <taxon>Bacilli</taxon>
        <taxon>Bacillales</taxon>
        <taxon>Staphylococcaceae</taxon>
        <taxon>Staphylococcus</taxon>
    </lineage>
</organism>
<dbReference type="EC" id="3.1.-.-" evidence="1"/>
<dbReference type="EMBL" id="CP000730">
    <property type="protein sequence ID" value="ABX28993.1"/>
    <property type="molecule type" value="Genomic_DNA"/>
</dbReference>
<dbReference type="RefSeq" id="WP_000600392.1">
    <property type="nucleotide sequence ID" value="NC_010079.1"/>
</dbReference>
<dbReference type="SMR" id="A8Z0B9"/>
<dbReference type="KEGG" id="sax:USA300HOU_0973"/>
<dbReference type="HOGENOM" id="CLU_132020_0_0_9"/>
<dbReference type="BioCyc" id="SAUR451516-HMP:GTV5-991-MONOMER"/>
<dbReference type="GO" id="GO:0016788">
    <property type="term" value="F:hydrolase activity, acting on ester bonds"/>
    <property type="evidence" value="ECO:0007669"/>
    <property type="project" value="UniProtKB-UniRule"/>
</dbReference>
<dbReference type="Gene3D" id="3.90.1140.10">
    <property type="entry name" value="Cyclic phosphodiesterase"/>
    <property type="match status" value="1"/>
</dbReference>
<dbReference type="HAMAP" id="MF_01444">
    <property type="entry name" value="2H_phosphoesterase_YjcG"/>
    <property type="match status" value="1"/>
</dbReference>
<dbReference type="InterPro" id="IPR050580">
    <property type="entry name" value="2H_phosphoesterase_YjcG-like"/>
</dbReference>
<dbReference type="InterPro" id="IPR009097">
    <property type="entry name" value="Cyclic_Pdiesterase"/>
</dbReference>
<dbReference type="InterPro" id="IPR022932">
    <property type="entry name" value="YjcG"/>
</dbReference>
<dbReference type="NCBIfam" id="NF010223">
    <property type="entry name" value="PRK13679.1"/>
    <property type="match status" value="1"/>
</dbReference>
<dbReference type="PANTHER" id="PTHR40037:SF1">
    <property type="entry name" value="PHOSPHOESTERASE SAOUHSC_00951-RELATED"/>
    <property type="match status" value="1"/>
</dbReference>
<dbReference type="PANTHER" id="PTHR40037">
    <property type="entry name" value="PHOSPHOESTERASE YJCG-RELATED"/>
    <property type="match status" value="1"/>
</dbReference>
<dbReference type="Pfam" id="PF13563">
    <property type="entry name" value="2_5_RNA_ligase2"/>
    <property type="match status" value="1"/>
</dbReference>
<dbReference type="SUPFAM" id="SSF55144">
    <property type="entry name" value="LigT-like"/>
    <property type="match status" value="1"/>
</dbReference>
<sequence length="169" mass="19326">MILGLALIPSKSFQEAVDSYRKRYDKQYSRIKPHVTIKAPFEIKDGDLDSVIEQVRARINGIPAVEVHATKASSFKPTNNVIYFKVAKTDDLEELFNRFNGEDFYGEAEHVFVPHFTIAQGLSSQEFEDIFGQVALAGVDHKEIIDELTLLRFDDDEDKWKVIETFKLA</sequence>
<name>Y973_STAAT</name>
<comment type="similarity">
    <text evidence="1">Belongs to the 2H phosphoesterase superfamily. YjcG family.</text>
</comment>
<feature type="chain" id="PRO_1000087465" description="Putative phosphoesterase USA300HOU_0973">
    <location>
        <begin position="1"/>
        <end position="169"/>
    </location>
</feature>
<feature type="short sequence motif" description="HXTX 1" evidence="1">
    <location>
        <begin position="34"/>
        <end position="37"/>
    </location>
</feature>
<feature type="short sequence motif" description="HXTX 2" evidence="1">
    <location>
        <begin position="115"/>
        <end position="118"/>
    </location>
</feature>
<feature type="active site" description="Proton donor" evidence="1">
    <location>
        <position position="34"/>
    </location>
</feature>
<feature type="active site" description="Proton acceptor" evidence="1">
    <location>
        <position position="115"/>
    </location>
</feature>
<accession>A8Z0B9</accession>